<evidence type="ECO:0000250" key="1"/>
<evidence type="ECO:0000250" key="2">
    <source>
        <dbReference type="UniProtKB" id="Q6NVY1"/>
    </source>
</evidence>
<evidence type="ECO:0000305" key="3"/>
<evidence type="ECO:0007744" key="4">
    <source>
    </source>
</evidence>
<evidence type="ECO:0007744" key="5">
    <source>
    </source>
</evidence>
<reference key="1">
    <citation type="journal article" date="2005" name="Science">
        <title>The transcriptional landscape of the mammalian genome.</title>
        <authorList>
            <person name="Carninci P."/>
            <person name="Kasukawa T."/>
            <person name="Katayama S."/>
            <person name="Gough J."/>
            <person name="Frith M.C."/>
            <person name="Maeda N."/>
            <person name="Oyama R."/>
            <person name="Ravasi T."/>
            <person name="Lenhard B."/>
            <person name="Wells C."/>
            <person name="Kodzius R."/>
            <person name="Shimokawa K."/>
            <person name="Bajic V.B."/>
            <person name="Brenner S.E."/>
            <person name="Batalov S."/>
            <person name="Forrest A.R."/>
            <person name="Zavolan M."/>
            <person name="Davis M.J."/>
            <person name="Wilming L.G."/>
            <person name="Aidinis V."/>
            <person name="Allen J.E."/>
            <person name="Ambesi-Impiombato A."/>
            <person name="Apweiler R."/>
            <person name="Aturaliya R.N."/>
            <person name="Bailey T.L."/>
            <person name="Bansal M."/>
            <person name="Baxter L."/>
            <person name="Beisel K.W."/>
            <person name="Bersano T."/>
            <person name="Bono H."/>
            <person name="Chalk A.M."/>
            <person name="Chiu K.P."/>
            <person name="Choudhary V."/>
            <person name="Christoffels A."/>
            <person name="Clutterbuck D.R."/>
            <person name="Crowe M.L."/>
            <person name="Dalla E."/>
            <person name="Dalrymple B.P."/>
            <person name="de Bono B."/>
            <person name="Della Gatta G."/>
            <person name="di Bernardo D."/>
            <person name="Down T."/>
            <person name="Engstrom P."/>
            <person name="Fagiolini M."/>
            <person name="Faulkner G."/>
            <person name="Fletcher C.F."/>
            <person name="Fukushima T."/>
            <person name="Furuno M."/>
            <person name="Futaki S."/>
            <person name="Gariboldi M."/>
            <person name="Georgii-Hemming P."/>
            <person name="Gingeras T.R."/>
            <person name="Gojobori T."/>
            <person name="Green R.E."/>
            <person name="Gustincich S."/>
            <person name="Harbers M."/>
            <person name="Hayashi Y."/>
            <person name="Hensch T.K."/>
            <person name="Hirokawa N."/>
            <person name="Hill D."/>
            <person name="Huminiecki L."/>
            <person name="Iacono M."/>
            <person name="Ikeo K."/>
            <person name="Iwama A."/>
            <person name="Ishikawa T."/>
            <person name="Jakt M."/>
            <person name="Kanapin A."/>
            <person name="Katoh M."/>
            <person name="Kawasawa Y."/>
            <person name="Kelso J."/>
            <person name="Kitamura H."/>
            <person name="Kitano H."/>
            <person name="Kollias G."/>
            <person name="Krishnan S.P."/>
            <person name="Kruger A."/>
            <person name="Kummerfeld S.K."/>
            <person name="Kurochkin I.V."/>
            <person name="Lareau L.F."/>
            <person name="Lazarevic D."/>
            <person name="Lipovich L."/>
            <person name="Liu J."/>
            <person name="Liuni S."/>
            <person name="McWilliam S."/>
            <person name="Madan Babu M."/>
            <person name="Madera M."/>
            <person name="Marchionni L."/>
            <person name="Matsuda H."/>
            <person name="Matsuzawa S."/>
            <person name="Miki H."/>
            <person name="Mignone F."/>
            <person name="Miyake S."/>
            <person name="Morris K."/>
            <person name="Mottagui-Tabar S."/>
            <person name="Mulder N."/>
            <person name="Nakano N."/>
            <person name="Nakauchi H."/>
            <person name="Ng P."/>
            <person name="Nilsson R."/>
            <person name="Nishiguchi S."/>
            <person name="Nishikawa S."/>
            <person name="Nori F."/>
            <person name="Ohara O."/>
            <person name="Okazaki Y."/>
            <person name="Orlando V."/>
            <person name="Pang K.C."/>
            <person name="Pavan W.J."/>
            <person name="Pavesi G."/>
            <person name="Pesole G."/>
            <person name="Petrovsky N."/>
            <person name="Piazza S."/>
            <person name="Reed J."/>
            <person name="Reid J.F."/>
            <person name="Ring B.Z."/>
            <person name="Ringwald M."/>
            <person name="Rost B."/>
            <person name="Ruan Y."/>
            <person name="Salzberg S.L."/>
            <person name="Sandelin A."/>
            <person name="Schneider C."/>
            <person name="Schoenbach C."/>
            <person name="Sekiguchi K."/>
            <person name="Semple C.A."/>
            <person name="Seno S."/>
            <person name="Sessa L."/>
            <person name="Sheng Y."/>
            <person name="Shibata Y."/>
            <person name="Shimada H."/>
            <person name="Shimada K."/>
            <person name="Silva D."/>
            <person name="Sinclair B."/>
            <person name="Sperling S."/>
            <person name="Stupka E."/>
            <person name="Sugiura K."/>
            <person name="Sultana R."/>
            <person name="Takenaka Y."/>
            <person name="Taki K."/>
            <person name="Tammoja K."/>
            <person name="Tan S.L."/>
            <person name="Tang S."/>
            <person name="Taylor M.S."/>
            <person name="Tegner J."/>
            <person name="Teichmann S.A."/>
            <person name="Ueda H.R."/>
            <person name="van Nimwegen E."/>
            <person name="Verardo R."/>
            <person name="Wei C.L."/>
            <person name="Yagi K."/>
            <person name="Yamanishi H."/>
            <person name="Zabarovsky E."/>
            <person name="Zhu S."/>
            <person name="Zimmer A."/>
            <person name="Hide W."/>
            <person name="Bult C."/>
            <person name="Grimmond S.M."/>
            <person name="Teasdale R.D."/>
            <person name="Liu E.T."/>
            <person name="Brusic V."/>
            <person name="Quackenbush J."/>
            <person name="Wahlestedt C."/>
            <person name="Mattick J.S."/>
            <person name="Hume D.A."/>
            <person name="Kai C."/>
            <person name="Sasaki D."/>
            <person name="Tomaru Y."/>
            <person name="Fukuda S."/>
            <person name="Kanamori-Katayama M."/>
            <person name="Suzuki M."/>
            <person name="Aoki J."/>
            <person name="Arakawa T."/>
            <person name="Iida J."/>
            <person name="Imamura K."/>
            <person name="Itoh M."/>
            <person name="Kato T."/>
            <person name="Kawaji H."/>
            <person name="Kawagashira N."/>
            <person name="Kawashima T."/>
            <person name="Kojima M."/>
            <person name="Kondo S."/>
            <person name="Konno H."/>
            <person name="Nakano K."/>
            <person name="Ninomiya N."/>
            <person name="Nishio T."/>
            <person name="Okada M."/>
            <person name="Plessy C."/>
            <person name="Shibata K."/>
            <person name="Shiraki T."/>
            <person name="Suzuki S."/>
            <person name="Tagami M."/>
            <person name="Waki K."/>
            <person name="Watahiki A."/>
            <person name="Okamura-Oho Y."/>
            <person name="Suzuki H."/>
            <person name="Kawai J."/>
            <person name="Hayashizaki Y."/>
        </authorList>
    </citation>
    <scope>NUCLEOTIDE SEQUENCE [LARGE SCALE MRNA]</scope>
    <source>
        <strain>C57BL/6J</strain>
    </source>
</reference>
<reference key="2">
    <citation type="journal article" date="2004" name="Genome Res.">
        <title>The status, quality, and expansion of the NIH full-length cDNA project: the Mammalian Gene Collection (MGC).</title>
        <authorList>
            <consortium name="The MGC Project Team"/>
        </authorList>
    </citation>
    <scope>NUCLEOTIDE SEQUENCE [LARGE SCALE MRNA]</scope>
    <source>
        <strain>FVB/N</strain>
        <tissue>Kidney</tissue>
    </source>
</reference>
<reference key="3">
    <citation type="submission" date="2009-01" db="UniProtKB">
        <authorList>
            <person name="Lubec G."/>
            <person name="Sunyer B."/>
            <person name="Chen W.-Q."/>
        </authorList>
    </citation>
    <scope>PROTEIN SEQUENCE OF 223-232</scope>
    <scope>IDENTIFICATION BY MASS SPECTROMETRY</scope>
    <source>
        <strain>OF1</strain>
        <tissue>Hippocampus</tissue>
    </source>
</reference>
<reference key="4">
    <citation type="journal article" date="2010" name="Cell">
        <title>A tissue-specific atlas of mouse protein phosphorylation and expression.</title>
        <authorList>
            <person name="Huttlin E.L."/>
            <person name="Jedrychowski M.P."/>
            <person name="Elias J.E."/>
            <person name="Goswami T."/>
            <person name="Rad R."/>
            <person name="Beausoleil S.A."/>
            <person name="Villen J."/>
            <person name="Haas W."/>
            <person name="Sowa M.E."/>
            <person name="Gygi S.P."/>
        </authorList>
    </citation>
    <scope>IDENTIFICATION BY MASS SPECTROMETRY [LARGE SCALE ANALYSIS]</scope>
    <source>
        <tissue>Brain</tissue>
        <tissue>Brown adipose tissue</tissue>
        <tissue>Heart</tissue>
        <tissue>Kidney</tissue>
        <tissue>Liver</tissue>
        <tissue>Lung</tissue>
        <tissue>Pancreas</tissue>
        <tissue>Spleen</tissue>
        <tissue>Testis</tissue>
    </source>
</reference>
<reference key="5">
    <citation type="journal article" date="2013" name="Mol. Cell">
        <title>SIRT5-mediated lysine desuccinylation impacts diverse metabolic pathways.</title>
        <authorList>
            <person name="Park J."/>
            <person name="Chen Y."/>
            <person name="Tishkoff D.X."/>
            <person name="Peng C."/>
            <person name="Tan M."/>
            <person name="Dai L."/>
            <person name="Xie Z."/>
            <person name="Zhang Y."/>
            <person name="Zwaans B.M."/>
            <person name="Skinner M.E."/>
            <person name="Lombard D.B."/>
            <person name="Zhao Y."/>
        </authorList>
    </citation>
    <scope>ACETYLATION [LARGE SCALE ANALYSIS] AT LYS-352</scope>
    <scope>SUCCINYLATION [LARGE SCALE ANALYSIS] AT LYS-54; LYS-91; LYS-100; LYS-220; LYS-249; LYS-256; LYS-296; LYS-300; LYS-352 AND LYS-376</scope>
    <scope>IDENTIFICATION BY MASS SPECTROMETRY [LARGE SCALE ANALYSIS]</scope>
    <source>
        <tissue>Embryonic fibroblast</tissue>
        <tissue>Liver</tissue>
    </source>
</reference>
<reference key="6">
    <citation type="journal article" date="2013" name="Proc. Natl. Acad. Sci. U.S.A.">
        <title>Label-free quantitative proteomics of the lysine acetylome in mitochondria identifies substrates of SIRT3 in metabolic pathways.</title>
        <authorList>
            <person name="Rardin M.J."/>
            <person name="Newman J.C."/>
            <person name="Held J.M."/>
            <person name="Cusack M.P."/>
            <person name="Sorensen D.J."/>
            <person name="Li B."/>
            <person name="Schilling B."/>
            <person name="Mooney S.D."/>
            <person name="Kahn C.R."/>
            <person name="Verdin E."/>
            <person name="Gibson B.W."/>
        </authorList>
    </citation>
    <scope>ACETYLATION [LARGE SCALE ANALYSIS] AT LYS-54; LYS-91; LYS-100; LYS-220; LYS-296; LYS-352; LYS-359 AND LYS-364</scope>
    <scope>IDENTIFICATION BY MASS SPECTROMETRY [LARGE SCALE ANALYSIS]</scope>
    <source>
        <tissue>Liver</tissue>
    </source>
</reference>
<keyword id="KW-0007">Acetylation</keyword>
<keyword id="KW-0101">Branched-chain amino acid catabolism</keyword>
<keyword id="KW-0903">Direct protein sequencing</keyword>
<keyword id="KW-0378">Hydrolase</keyword>
<keyword id="KW-0496">Mitochondrion</keyword>
<keyword id="KW-0597">Phosphoprotein</keyword>
<keyword id="KW-1185">Reference proteome</keyword>
<keyword id="KW-0809">Transit peptide</keyword>
<accession>Q8QZS1</accession>
<organism>
    <name type="scientific">Mus musculus</name>
    <name type="common">Mouse</name>
    <dbReference type="NCBI Taxonomy" id="10090"/>
    <lineage>
        <taxon>Eukaryota</taxon>
        <taxon>Metazoa</taxon>
        <taxon>Chordata</taxon>
        <taxon>Craniata</taxon>
        <taxon>Vertebrata</taxon>
        <taxon>Euteleostomi</taxon>
        <taxon>Mammalia</taxon>
        <taxon>Eutheria</taxon>
        <taxon>Euarchontoglires</taxon>
        <taxon>Glires</taxon>
        <taxon>Rodentia</taxon>
        <taxon>Myomorpha</taxon>
        <taxon>Muroidea</taxon>
        <taxon>Muridae</taxon>
        <taxon>Murinae</taxon>
        <taxon>Mus</taxon>
        <taxon>Mus</taxon>
    </lineage>
</organism>
<protein>
    <recommendedName>
        <fullName>3-hydroxyisobutyryl-CoA hydrolase, mitochondrial</fullName>
        <ecNumber>3.1.2.4</ecNumber>
    </recommendedName>
    <alternativeName>
        <fullName>3-hydroxyisobutyryl-coenzyme A hydrolase</fullName>
        <shortName>HIB-CoA hydrolase</shortName>
        <shortName>HIBYL-CoA-H</shortName>
    </alternativeName>
</protein>
<proteinExistence type="evidence at protein level"/>
<name>HIBCH_MOUSE</name>
<gene>
    <name type="primary">Hibch</name>
</gene>
<dbReference type="EC" id="3.1.2.4"/>
<dbReference type="EMBL" id="AK076038">
    <property type="protein sequence ID" value="BAC36138.1"/>
    <property type="molecule type" value="mRNA"/>
</dbReference>
<dbReference type="EMBL" id="BC026437">
    <property type="protein sequence ID" value="AAH26437.1"/>
    <property type="molecule type" value="mRNA"/>
</dbReference>
<dbReference type="CCDS" id="CCDS14948.1"/>
<dbReference type="RefSeq" id="NP_666220.1">
    <property type="nucleotide sequence ID" value="NM_146108.2"/>
</dbReference>
<dbReference type="SMR" id="Q8QZS1"/>
<dbReference type="BioGRID" id="230588">
    <property type="interactions" value="10"/>
</dbReference>
<dbReference type="FunCoup" id="Q8QZS1">
    <property type="interactions" value="2502"/>
</dbReference>
<dbReference type="IntAct" id="Q8QZS1">
    <property type="interactions" value="1"/>
</dbReference>
<dbReference type="STRING" id="10090.ENSMUSP00000045606"/>
<dbReference type="GlyGen" id="Q8QZS1">
    <property type="glycosylation" value="1 site, 1 O-linked glycan (1 site)"/>
</dbReference>
<dbReference type="iPTMnet" id="Q8QZS1"/>
<dbReference type="PhosphoSitePlus" id="Q8QZS1"/>
<dbReference type="SwissPalm" id="Q8QZS1"/>
<dbReference type="jPOST" id="Q8QZS1"/>
<dbReference type="PaxDb" id="10090-ENSMUSP00000045606"/>
<dbReference type="PeptideAtlas" id="Q8QZS1"/>
<dbReference type="ProteomicsDB" id="273339"/>
<dbReference type="Pumba" id="Q8QZS1"/>
<dbReference type="Antibodypedia" id="34034">
    <property type="antibodies" value="304 antibodies from 28 providers"/>
</dbReference>
<dbReference type="Ensembl" id="ENSMUST00000044478.7">
    <property type="protein sequence ID" value="ENSMUSP00000045606.7"/>
    <property type="gene ID" value="ENSMUSG00000041426.13"/>
</dbReference>
<dbReference type="GeneID" id="227095"/>
<dbReference type="KEGG" id="mmu:227095"/>
<dbReference type="UCSC" id="uc007ayp.1">
    <property type="organism name" value="mouse"/>
</dbReference>
<dbReference type="AGR" id="MGI:1923792"/>
<dbReference type="CTD" id="26275"/>
<dbReference type="MGI" id="MGI:1923792">
    <property type="gene designation" value="Hibch"/>
</dbReference>
<dbReference type="VEuPathDB" id="HostDB:ENSMUSG00000041426"/>
<dbReference type="eggNOG" id="KOG1684">
    <property type="taxonomic scope" value="Eukaryota"/>
</dbReference>
<dbReference type="GeneTree" id="ENSGT00890000139491"/>
<dbReference type="HOGENOM" id="CLU_009834_22_1_1"/>
<dbReference type="InParanoid" id="Q8QZS1"/>
<dbReference type="OMA" id="EVFTMEY"/>
<dbReference type="OrthoDB" id="1737613at2759"/>
<dbReference type="PhylomeDB" id="Q8QZS1"/>
<dbReference type="TreeFam" id="TF314329"/>
<dbReference type="Reactome" id="R-MMU-70895">
    <property type="pathway name" value="Branched-chain amino acid catabolism"/>
</dbReference>
<dbReference type="UniPathway" id="UPA00362"/>
<dbReference type="BioGRID-ORCS" id="227095">
    <property type="hits" value="3 hits in 80 CRISPR screens"/>
</dbReference>
<dbReference type="ChiTaRS" id="Hibch">
    <property type="organism name" value="mouse"/>
</dbReference>
<dbReference type="PRO" id="PR:Q8QZS1"/>
<dbReference type="Proteomes" id="UP000000589">
    <property type="component" value="Chromosome 1"/>
</dbReference>
<dbReference type="RNAct" id="Q8QZS1">
    <property type="molecule type" value="protein"/>
</dbReference>
<dbReference type="Bgee" id="ENSMUSG00000041426">
    <property type="expression patterns" value="Expressed in intercostal muscle and 250 other cell types or tissues"/>
</dbReference>
<dbReference type="ExpressionAtlas" id="Q8QZS1">
    <property type="expression patterns" value="baseline and differential"/>
</dbReference>
<dbReference type="GO" id="GO:0005739">
    <property type="term" value="C:mitochondrion"/>
    <property type="evidence" value="ECO:0007005"/>
    <property type="project" value="MGI"/>
</dbReference>
<dbReference type="GO" id="GO:0003860">
    <property type="term" value="F:3-hydroxyisobutyryl-CoA hydrolase activity"/>
    <property type="evidence" value="ECO:0007669"/>
    <property type="project" value="UniProtKB-EC"/>
</dbReference>
<dbReference type="GO" id="GO:0006574">
    <property type="term" value="P:valine catabolic process"/>
    <property type="evidence" value="ECO:0007669"/>
    <property type="project" value="UniProtKB-UniPathway"/>
</dbReference>
<dbReference type="CDD" id="cd06558">
    <property type="entry name" value="crotonase-like"/>
    <property type="match status" value="1"/>
</dbReference>
<dbReference type="FunFam" id="3.90.226.10:FF:000026">
    <property type="entry name" value="3-hydroxyisobutyryl-CoA hydrolase, mitochondrial"/>
    <property type="match status" value="1"/>
</dbReference>
<dbReference type="Gene3D" id="3.90.226.10">
    <property type="entry name" value="2-enoyl-CoA Hydratase, Chain A, domain 1"/>
    <property type="match status" value="1"/>
</dbReference>
<dbReference type="InterPro" id="IPR029045">
    <property type="entry name" value="ClpP/crotonase-like_dom_sf"/>
</dbReference>
<dbReference type="InterPro" id="IPR045004">
    <property type="entry name" value="ECH_dom"/>
</dbReference>
<dbReference type="InterPro" id="IPR032259">
    <property type="entry name" value="HIBYL-CoA-H"/>
</dbReference>
<dbReference type="NCBIfam" id="NF004127">
    <property type="entry name" value="PRK05617.1"/>
    <property type="match status" value="1"/>
</dbReference>
<dbReference type="PANTHER" id="PTHR43176:SF3">
    <property type="entry name" value="3-HYDROXYISOBUTYRYL-COA HYDROLASE, MITOCHONDRIAL"/>
    <property type="match status" value="1"/>
</dbReference>
<dbReference type="PANTHER" id="PTHR43176">
    <property type="entry name" value="3-HYDROXYISOBUTYRYL-COA HYDROLASE-RELATED"/>
    <property type="match status" value="1"/>
</dbReference>
<dbReference type="Pfam" id="PF16113">
    <property type="entry name" value="ECH_2"/>
    <property type="match status" value="1"/>
</dbReference>
<dbReference type="SUPFAM" id="SSF52096">
    <property type="entry name" value="ClpP/crotonase"/>
    <property type="match status" value="1"/>
</dbReference>
<comment type="function">
    <text evidence="1">Hydrolyzes 3-hydroxyisobutyryl-CoA (HIBYL-CoA), a saline catabolite. Has high activity toward isobutyryl-CoA. Could be an isobutyryl-CoA dehydrogenase that functions in valine catabolism. Also hydrolyzes 3-hydroxypropanoyl-CoA (By similarity).</text>
</comment>
<comment type="catalytic activity">
    <reaction>
        <text>3-hydroxy-2-methylpropanoyl-CoA + H2O = 3-hydroxy-2-methylpropanoate + CoA + H(+)</text>
        <dbReference type="Rhea" id="RHEA:20888"/>
        <dbReference type="ChEBI" id="CHEBI:11805"/>
        <dbReference type="ChEBI" id="CHEBI:15377"/>
        <dbReference type="ChEBI" id="CHEBI:15378"/>
        <dbReference type="ChEBI" id="CHEBI:57287"/>
        <dbReference type="ChEBI" id="CHEBI:57340"/>
        <dbReference type="EC" id="3.1.2.4"/>
    </reaction>
</comment>
<comment type="pathway">
    <text>Amino-acid degradation; L-valine degradation.</text>
</comment>
<comment type="subcellular location">
    <subcellularLocation>
        <location evidence="1">Mitochondrion</location>
    </subcellularLocation>
</comment>
<comment type="similarity">
    <text evidence="3">Belongs to the enoyl-CoA hydratase/isomerase family.</text>
</comment>
<feature type="transit peptide" description="Mitochondrion" evidence="1">
    <location>
        <begin position="1"/>
        <end position="32"/>
    </location>
</feature>
<feature type="chain" id="PRO_0000284930" description="3-hydroxyisobutyryl-CoA hydrolase, mitochondrial">
    <location>
        <begin position="33"/>
        <end position="385"/>
    </location>
</feature>
<feature type="binding site" evidence="1">
    <location>
        <position position="120"/>
    </location>
    <ligand>
        <name>substrate</name>
    </ligand>
</feature>
<feature type="binding site" evidence="1">
    <location>
        <position position="145"/>
    </location>
    <ligand>
        <name>substrate</name>
    </ligand>
</feature>
<feature type="binding site" evidence="1">
    <location>
        <position position="168"/>
    </location>
    <ligand>
        <name>substrate</name>
    </ligand>
</feature>
<feature type="binding site" evidence="1">
    <location>
        <position position="176"/>
    </location>
    <ligand>
        <name>substrate</name>
    </ligand>
</feature>
<feature type="modified residue" description="N6-acetyllysine; alternate" evidence="4">
    <location>
        <position position="54"/>
    </location>
</feature>
<feature type="modified residue" description="N6-succinyllysine; alternate" evidence="5">
    <location>
        <position position="54"/>
    </location>
</feature>
<feature type="modified residue" description="N6-acetyllysine; alternate" evidence="4">
    <location>
        <position position="91"/>
    </location>
</feature>
<feature type="modified residue" description="N6-succinyllysine; alternate" evidence="5">
    <location>
        <position position="91"/>
    </location>
</feature>
<feature type="modified residue" description="N6-acetyllysine; alternate" evidence="4">
    <location>
        <position position="100"/>
    </location>
</feature>
<feature type="modified residue" description="N6-succinyllysine; alternate" evidence="5">
    <location>
        <position position="100"/>
    </location>
</feature>
<feature type="modified residue" description="N6-acetyllysine; alternate" evidence="4">
    <location>
        <position position="220"/>
    </location>
</feature>
<feature type="modified residue" description="N6-succinyllysine; alternate" evidence="5">
    <location>
        <position position="220"/>
    </location>
</feature>
<feature type="modified residue" description="Phosphoserine" evidence="2">
    <location>
        <position position="233"/>
    </location>
</feature>
<feature type="modified residue" description="N6-succinyllysine" evidence="5">
    <location>
        <position position="249"/>
    </location>
</feature>
<feature type="modified residue" description="N6-succinyllysine" evidence="5">
    <location>
        <position position="256"/>
    </location>
</feature>
<feature type="modified residue" description="N6-acetyllysine; alternate" evidence="4">
    <location>
        <position position="296"/>
    </location>
</feature>
<feature type="modified residue" description="N6-succinyllysine; alternate" evidence="5">
    <location>
        <position position="296"/>
    </location>
</feature>
<feature type="modified residue" description="N6-succinyllysine" evidence="5">
    <location>
        <position position="300"/>
    </location>
</feature>
<feature type="modified residue" description="N6-acetyllysine; alternate" evidence="4 5">
    <location>
        <position position="352"/>
    </location>
</feature>
<feature type="modified residue" description="N6-succinyllysine; alternate" evidence="5">
    <location>
        <position position="352"/>
    </location>
</feature>
<feature type="modified residue" description="N6-acetyllysine" evidence="4">
    <location>
        <position position="359"/>
    </location>
</feature>
<feature type="modified residue" description="N6-acetyllysine" evidence="4">
    <location>
        <position position="364"/>
    </location>
</feature>
<feature type="modified residue" description="N6-succinyllysine" evidence="5">
    <location>
        <position position="376"/>
    </location>
</feature>
<sequence>MGQPYAWRLLSRVSSFRRASVILQHLRMSMHTEAAEVLLERRGCGGVITLNRPKFLNALSLNMIRQIYPQLKTWEQDPDTFLIIIKGAGGKAFCAGGDIKALSEAKKARQNLTQDLFREEYILNNAIASCQKPYVALIDGITMGGGVGLSVHGQFRVATERSLFAMPETGIGLFPDVGGGYFLPRLQGKLGYFLALTGYRLKGRDVHRAGIATHFVDSEKLRVLEEELLALKSPSAEDVAGVLESYHAKSKMDQDKSIIFEEHMDKINSCFSANTVEQIIENLRQDGSPFAIEQMKVINKMSPTSLKITLRQLMEGSSKTLQEVLIMEYRITQACMEGHDFHEGVRAVLIDKDQTPKWKPANLKDVTDEDLNSYFKSLGSSDLKF</sequence>